<sequence>MALNGRTMFPAFKYYAIDYLQEDIIKERLYRDALLLQIPSCLNQDKNIIDDKYRTPWTRAIPVQEMEDNSVLEQWRTRFCVEGVPEKKTVTGVMINGTFEEIVPSSNPNSPPGIENDKLFPSKDYVDDFIPVKCSLYYPGVKAEHQGLLIDEEMIFMNKAMDNHLPTVNGLLSRLKLYLVKDPFLDFKEELSGKDNFTEYFSVQECSEPFVRDFHMAEETFCKKKLPSVFPSGFKSLISTNPKQEILILPPSKLKKPLNSIPKIMDSVDESECFKGDITSKHEFDTEDIKCNSTENLTFASLCEPECSEPGDLEMPPTHLILPRQHSAVSSLHMGFQTFPFSATCKINLLSAGESANKYCMLWQLGGCRNSWVSFLLTVPRFQEPSSQYSLADMRNIFSVKGDSLVINPAKAKGWRQARLHPIMAETLAHLKAYLCHNGLSSQETKLEIFLPTKVFQLESWLELKSRPLPIVPISEKSTDVHQLHPQKRPIPSSEKEVPHLCLSGESISVKKSKVEANPKNDQEPEARIMQKPENSCVGLGCSSQVPSAESASSSQIQASYDKKQDDLDLLSEFIILRSKHQTFPSEADVDVKSHDHDQNNEFQDKEKYSLTLQEESLVASNSKAPEERCEERTDGVIEIPASDTQCQAYCLLEATANPILKELVCLCTYPAANWKFATVNFDQTRFFLKEQEKKINDATHPDKNDDRKMTFRHAALLHLLITIRDVLLTCNLDTALGYLSNAKDIYKSVLDSRLDNIWRQLKILQFIKEKRPKSNYKIQELQCQILSRLQNQQQMKVLIIIRMDSDGEKHLLIKTLKKIEGLTMTVLRSNDRKKILETTSILKGTNACVVVHNHSIGADFPWSSFSLVVEYNHVGHSCWAEHCQLLDIPFLAFKVAVPDTALQRDALLDGFGGFLLKIPIPYVFFASEGLLNTPEILRLLESNYNITLVERCCCGSLKLFGSTECYVVVTVDEHTAIVVQDLEELHHEKASDNIIMRLMALSFQYSCCWIILYSKETLNSQYHLTEETLRHLAQVYAALVSSGLKSEELDVKLIIAPGVEETALIIRQIADHNLMTSTRDPHEWLDKSWVEVSPSKEEMSLLDFPCINPLVAQLMLHRAPSLHWLLIATPAELQELLPQVPGKVLKHFCSITSLFKISSPSMTKSSQISSLQEDMNQTDLFISQSSAPIIQEQEEYYPYEDSEGTSSSPVELRATPCMLPSAAPHSQRGCWEDPSCGPDPVQNNPSLMNAESKKVTWPSVPSWSDSESDVFSLARTQVSCEPIMTLTDSQRRGTNGFVNCPEAKGPRNMQVSTPVFLPENSQSHLHWDFKKNSCRKQIYSFNPSCGTEQTTYNKWYSWKDDFSSNQPECLWDEMEDVTYRNANAGTRETFWRELPAVPSWDSPCASDSNANQRGFKGLDFCQRAGNYLGQRSLPVSSSNWGDYKTPTDLMYSQVPQPKKRRLMYEKVPGRVDGQTRLKFL</sequence>
<feature type="chain" id="PRO_0000444881" description="Protein shortage in chiasmata 1 ortholog">
    <location>
        <begin position="1"/>
        <end position="1481"/>
    </location>
</feature>
<feature type="region of interest" description="Disordered" evidence="2">
    <location>
        <begin position="479"/>
        <end position="498"/>
    </location>
</feature>
<feature type="region of interest" description="Disordered" evidence="2">
    <location>
        <begin position="512"/>
        <end position="560"/>
    </location>
</feature>
<feature type="compositionally biased region" description="Basic and acidic residues" evidence="2">
    <location>
        <begin position="513"/>
        <end position="531"/>
    </location>
</feature>
<feature type="compositionally biased region" description="Low complexity" evidence="2">
    <location>
        <begin position="543"/>
        <end position="560"/>
    </location>
</feature>
<accession>A2ALV5</accession>
<organism>
    <name type="scientific">Mus musculus</name>
    <name type="common">Mouse</name>
    <dbReference type="NCBI Taxonomy" id="10090"/>
    <lineage>
        <taxon>Eukaryota</taxon>
        <taxon>Metazoa</taxon>
        <taxon>Chordata</taxon>
        <taxon>Craniata</taxon>
        <taxon>Vertebrata</taxon>
        <taxon>Euteleostomi</taxon>
        <taxon>Mammalia</taxon>
        <taxon>Eutheria</taxon>
        <taxon>Euarchontoglires</taxon>
        <taxon>Glires</taxon>
        <taxon>Rodentia</taxon>
        <taxon>Myomorpha</taxon>
        <taxon>Muroidea</taxon>
        <taxon>Muridae</taxon>
        <taxon>Murinae</taxon>
        <taxon>Mus</taxon>
        <taxon>Mus</taxon>
    </lineage>
</organism>
<dbReference type="EC" id="3.6.-.-" evidence="1"/>
<dbReference type="EMBL" id="AL805972">
    <property type="status" value="NOT_ANNOTATED_CDS"/>
    <property type="molecule type" value="Genomic_DNA"/>
</dbReference>
<dbReference type="EMBL" id="AL808112">
    <property type="status" value="NOT_ANNOTATED_CDS"/>
    <property type="molecule type" value="Genomic_DNA"/>
</dbReference>
<dbReference type="EMBL" id="BX001048">
    <property type="status" value="NOT_ANNOTATED_CDS"/>
    <property type="molecule type" value="Genomic_DNA"/>
</dbReference>
<dbReference type="CCDS" id="CCDS89749.1"/>
<dbReference type="RefSeq" id="NP_001357772.1">
    <property type="nucleotide sequence ID" value="NM_001370843.1"/>
</dbReference>
<dbReference type="RefSeq" id="XP_017175979.1">
    <property type="nucleotide sequence ID" value="XM_017320490.1"/>
</dbReference>
<dbReference type="FunCoup" id="A2ALV5">
    <property type="interactions" value="83"/>
</dbReference>
<dbReference type="STRING" id="10090.ENSMUSP00000103171"/>
<dbReference type="iPTMnet" id="A2ALV5"/>
<dbReference type="PhosphoSitePlus" id="A2ALV5"/>
<dbReference type="jPOST" id="A2ALV5"/>
<dbReference type="PaxDb" id="10090-ENSMUSP00000103171"/>
<dbReference type="ProteomicsDB" id="373551"/>
<dbReference type="Antibodypedia" id="49256">
    <property type="antibodies" value="34 antibodies from 5 providers"/>
</dbReference>
<dbReference type="Ensembl" id="ENSMUST00000107547.2">
    <property type="protein sequence ID" value="ENSMUSP00000103171.2"/>
    <property type="gene ID" value="ENSMUSG00000038598.10"/>
</dbReference>
<dbReference type="GeneID" id="100155"/>
<dbReference type="AGR" id="MGI:2140313"/>
<dbReference type="MGI" id="MGI:2140313">
    <property type="gene designation" value="Shoc1"/>
</dbReference>
<dbReference type="VEuPathDB" id="HostDB:ENSMUSG00000038598"/>
<dbReference type="eggNOG" id="ENOG502QVCW">
    <property type="taxonomic scope" value="Eukaryota"/>
</dbReference>
<dbReference type="GeneTree" id="ENSGT00390000013037"/>
<dbReference type="HOGENOM" id="CLU_004755_1_0_1"/>
<dbReference type="InParanoid" id="A2ALV5"/>
<dbReference type="OMA" id="WIILYSK"/>
<dbReference type="OrthoDB" id="9909657at2759"/>
<dbReference type="TreeFam" id="TF338326"/>
<dbReference type="BioGRID-ORCS" id="100155">
    <property type="hits" value="0 hits in 39 CRISPR screens"/>
</dbReference>
<dbReference type="ChiTaRS" id="Shoc1">
    <property type="organism name" value="mouse"/>
</dbReference>
<dbReference type="PRO" id="PR:A2ALV5"/>
<dbReference type="Proteomes" id="UP000000589">
    <property type="component" value="Chromosome 4"/>
</dbReference>
<dbReference type="RNAct" id="A2ALV5">
    <property type="molecule type" value="protein"/>
</dbReference>
<dbReference type="Bgee" id="ENSMUSG00000038598">
    <property type="expression patterns" value="Expressed in animal zygote and 20 other cell types or tissues"/>
</dbReference>
<dbReference type="GO" id="GO:0005694">
    <property type="term" value="C:chromosome"/>
    <property type="evidence" value="ECO:0000314"/>
    <property type="project" value="UniProtKB"/>
</dbReference>
<dbReference type="GO" id="GO:0000794">
    <property type="term" value="C:condensed nuclear chromosome"/>
    <property type="evidence" value="ECO:0000314"/>
    <property type="project" value="UniProtKB"/>
</dbReference>
<dbReference type="GO" id="GO:0016887">
    <property type="term" value="F:ATP hydrolysis activity"/>
    <property type="evidence" value="ECO:0000250"/>
    <property type="project" value="UniProtKB"/>
</dbReference>
<dbReference type="GO" id="GO:0003697">
    <property type="term" value="F:single-stranded DNA binding"/>
    <property type="evidence" value="ECO:0000250"/>
    <property type="project" value="UniProtKB"/>
</dbReference>
<dbReference type="GO" id="GO:0007131">
    <property type="term" value="P:reciprocal meiotic recombination"/>
    <property type="evidence" value="ECO:0000315"/>
    <property type="project" value="UniProtKB"/>
</dbReference>
<dbReference type="GO" id="GO:0000712">
    <property type="term" value="P:resolution of meiotic recombination intermediates"/>
    <property type="evidence" value="ECO:0000315"/>
    <property type="project" value="UniProtKB"/>
</dbReference>
<dbReference type="GO" id="GO:0007130">
    <property type="term" value="P:synaptonemal complex assembly"/>
    <property type="evidence" value="ECO:0000315"/>
    <property type="project" value="UniProtKB"/>
</dbReference>
<dbReference type="InterPro" id="IPR039991">
    <property type="entry name" value="SHOC1"/>
</dbReference>
<dbReference type="PANTHER" id="PTHR35668">
    <property type="entry name" value="PROTEIN SHORTAGE IN CHIASMATA 1 ORTHOLOG"/>
    <property type="match status" value="1"/>
</dbReference>
<dbReference type="PANTHER" id="PTHR35668:SF1">
    <property type="entry name" value="PROTEIN SHORTAGE IN CHIASMATA 1 ORTHOLOG"/>
    <property type="match status" value="1"/>
</dbReference>
<dbReference type="Pfam" id="PF17825">
    <property type="entry name" value="DUF5587"/>
    <property type="match status" value="1"/>
</dbReference>
<protein>
    <recommendedName>
        <fullName evidence="9">Protein shortage in chiasmata 1 ortholog</fullName>
        <ecNumber evidence="1">3.6.-.-</ecNumber>
    </recommendedName>
    <alternativeName>
        <fullName evidence="8">Protein ZIP2 homolog</fullName>
        <shortName evidence="8">MZip2</shortName>
    </alternativeName>
</protein>
<gene>
    <name evidence="7" type="primary">Shoc1</name>
    <name evidence="8" type="synonym">Zip2</name>
</gene>
<name>SHOC1_MOUSE</name>
<comment type="function">
    <text evidence="1 3 4 6">ATPase required during meiosis for the formation of crossover recombination intermediates (PubMed:29742103). Binds DNA: preferentially binds to single-stranded DNA and DNA branched structures (By similarity). Does not show nuclease activity in vitro, but shows ATPase activity, which is stimulated by the presence of single-stranded DNA (By similarity). Plays a key role in homologous recombination and crossing-over in meiotic prophase I in male and female germ cells (PubMed:30272023). Required for proper synaptonemal complex assembly and homologous chromosome pairing (PubMed:35485979). Required for recruitment of TEX11 and MSH4 to recombination intermediates (PubMed:30272023).</text>
</comment>
<comment type="subunit">
    <text evidence="1 5">Interacts with TEX11 (By similarity). Interacts with SPO16 (PubMed:30746471).</text>
</comment>
<comment type="subcellular location">
    <subcellularLocation>
        <location evidence="3 4 5">Chromosome</location>
    </subcellularLocation>
    <text evidence="3">Localizes to meiotic chromosomes; associates with mid-stage meiotic recombination intermediates (PubMed:29742103). Localization requires meiotic double-strand breaks (DSBs) recombination intermediates catalyzed by DMC1 (PubMed:29742103).</text>
</comment>
<comment type="tissue specificity">
    <text evidence="3 4">Mainly expressed in adult testis.</text>
</comment>
<comment type="developmental stage">
    <text evidence="4">Expressed in embryonic ovaries at embryonic day 16.5.</text>
</comment>
<comment type="disruption phenotype">
    <text evidence="3 4">Mice show severe defects in meiotic prophase I, such as DNA double-strand break (DSB) repair, crossover formation and synapsis in spermatocytes and oocytes resulting in sterility in both male and females (PubMed:30272023). Embryonic lethality due to defects in meiosis (PubMed:29742103). The use of a hypomorphic allele showed that spermatogenesis progresses normally until the end of prophase I when spermatocytes arrest at metaphase I: homologous chromosomes pair in spermatocytes but show defective synapsis (PubMed:29742103).</text>
</comment>
<comment type="similarity">
    <text evidence="9">Belongs to the XPF family. Highly divergent.</text>
</comment>
<comment type="caution">
    <text evidence="10">Although related to the XPF family, the nuclease active site is not conserved.</text>
</comment>
<evidence type="ECO:0000250" key="1">
    <source>
        <dbReference type="UniProtKB" id="Q5VXU9"/>
    </source>
</evidence>
<evidence type="ECO:0000256" key="2">
    <source>
        <dbReference type="SAM" id="MobiDB-lite"/>
    </source>
</evidence>
<evidence type="ECO:0000269" key="3">
    <source>
    </source>
</evidence>
<evidence type="ECO:0000269" key="4">
    <source>
    </source>
</evidence>
<evidence type="ECO:0000269" key="5">
    <source>
    </source>
</evidence>
<evidence type="ECO:0000269" key="6">
    <source>
    </source>
</evidence>
<evidence type="ECO:0000303" key="7">
    <source>
    </source>
</evidence>
<evidence type="ECO:0000303" key="8">
    <source>
    </source>
</evidence>
<evidence type="ECO:0000305" key="9"/>
<evidence type="ECO:0000305" key="10">
    <source>
    </source>
</evidence>
<proteinExistence type="evidence at protein level"/>
<keyword id="KW-0158">Chromosome</keyword>
<keyword id="KW-0238">DNA-binding</keyword>
<keyword id="KW-0378">Hydrolase</keyword>
<keyword id="KW-0469">Meiosis</keyword>
<keyword id="KW-1185">Reference proteome</keyword>
<reference key="1">
    <citation type="journal article" date="2009" name="PLoS Biol.">
        <title>Lineage-specific biology revealed by a finished genome assembly of the mouse.</title>
        <authorList>
            <person name="Church D.M."/>
            <person name="Goodstadt L."/>
            <person name="Hillier L.W."/>
            <person name="Zody M.C."/>
            <person name="Goldstein S."/>
            <person name="She X."/>
            <person name="Bult C.J."/>
            <person name="Agarwala R."/>
            <person name="Cherry J.L."/>
            <person name="DiCuccio M."/>
            <person name="Hlavina W."/>
            <person name="Kapustin Y."/>
            <person name="Meric P."/>
            <person name="Maglott D."/>
            <person name="Birtle Z."/>
            <person name="Marques A.C."/>
            <person name="Graves T."/>
            <person name="Zhou S."/>
            <person name="Teague B."/>
            <person name="Potamousis K."/>
            <person name="Churas C."/>
            <person name="Place M."/>
            <person name="Herschleb J."/>
            <person name="Runnheim R."/>
            <person name="Forrest D."/>
            <person name="Amos-Landgraf J."/>
            <person name="Schwartz D.C."/>
            <person name="Cheng Z."/>
            <person name="Lindblad-Toh K."/>
            <person name="Eichler E.E."/>
            <person name="Ponting C.P."/>
        </authorList>
    </citation>
    <scope>NUCLEOTIDE SEQUENCE [LARGE SCALE GENOMIC DNA]</scope>
    <source>
        <strain>C57BL/6J</strain>
    </source>
</reference>
<reference key="2">
    <citation type="journal article" date="2018" name="Commun. Biol.">
        <title>Evolutionarily-conserved MZIP2 is essential for crossover formation in mammalian meiosis.</title>
        <authorList>
            <person name="Zhang Q."/>
            <person name="Shao J."/>
            <person name="Fan H.Y."/>
            <person name="Yu C."/>
        </authorList>
    </citation>
    <scope>FUNCTION</scope>
    <scope>DISRUPTION PHENOTYPE</scope>
    <scope>SUBCELLULAR LOCATION</scope>
</reference>
<reference key="3">
    <citation type="journal article" date="2018" name="PLoS Genet.">
        <title>SHOC1 is a ERCC4-(HhH)2-like protein, integral to the formation of crossover recombination intermediates during mammalian meiosis.</title>
        <authorList>
            <person name="Guiraldelli M.F."/>
            <person name="Felberg A."/>
            <person name="Almeida L.P."/>
            <person name="Parikh A."/>
            <person name="de Castro R.O."/>
            <person name="Pezza R.J."/>
        </authorList>
    </citation>
    <scope>FUNCTION</scope>
    <scope>SUBCELLULAR LOCATION</scope>
    <scope>TISSUE SPECIFICITY</scope>
    <scope>DISRUPTION PHENOTYPE</scope>
</reference>
<reference key="4">
    <citation type="journal article" date="2019" name="Sci. Adv.">
        <title>SPO16 binds SHOC1 to promote homologous recombination and crossing-over in meiotic prophase I.</title>
        <authorList>
            <person name="Zhang Q."/>
            <person name="Ji S.Y."/>
            <person name="Busayavalasa K."/>
            <person name="Yu C."/>
        </authorList>
    </citation>
    <scope>INTERACTION WITH SPO16</scope>
    <scope>SUBCELLULAR LOCATION</scope>
</reference>
<reference key="5">
    <citation type="journal article" date="2022" name="Mol. Hum. Reprod.">
        <title>Bi-allelic variants in SHOC1 cause non-obstructive azoospermia with meiosis arrest in humans and mice.</title>
        <authorList>
            <person name="Wang W."/>
            <person name="Meng L."/>
            <person name="He J."/>
            <person name="Su L."/>
            <person name="Li Y."/>
            <person name="Tan C."/>
            <person name="Xu X."/>
            <person name="Nie H."/>
            <person name="Zhang H."/>
            <person name="Du J."/>
            <person name="Lu G."/>
            <person name="Luo M."/>
            <person name="Lin G."/>
            <person name="Tu C."/>
            <person name="Tan Y.Q."/>
        </authorList>
    </citation>
    <scope>FUNCTION</scope>
</reference>